<organism>
    <name type="scientific">Klebsiella oxytoca</name>
    <dbReference type="NCBI Taxonomy" id="571"/>
    <lineage>
        <taxon>Bacteria</taxon>
        <taxon>Pseudomonadati</taxon>
        <taxon>Pseudomonadota</taxon>
        <taxon>Gammaproteobacteria</taxon>
        <taxon>Enterobacterales</taxon>
        <taxon>Enterobacteriaceae</taxon>
        <taxon>Klebsiella/Raoultella group</taxon>
        <taxon>Klebsiella</taxon>
    </lineage>
</organism>
<keyword id="KW-0029">Amino-acid transport</keyword>
<keyword id="KW-0997">Cell inner membrane</keyword>
<keyword id="KW-1003">Cell membrane</keyword>
<keyword id="KW-0406">Ion transport</keyword>
<keyword id="KW-0472">Membrane</keyword>
<keyword id="KW-0915">Sodium</keyword>
<keyword id="KW-0739">Sodium transport</keyword>
<keyword id="KW-0769">Symport</keyword>
<keyword id="KW-0812">Transmembrane</keyword>
<keyword id="KW-1133">Transmembrane helix</keyword>
<keyword id="KW-0813">Transport</keyword>
<feature type="chain" id="PRO_0000105400" description="Sodium/proline symporter">
    <location>
        <begin position="1"/>
        <end position="160" status="greater than"/>
    </location>
</feature>
<feature type="transmembrane region" description="Helical" evidence="2">
    <location>
        <begin position="6"/>
        <end position="26"/>
    </location>
</feature>
<feature type="transmembrane region" description="Helical" evidence="2">
    <location>
        <begin position="68"/>
        <end position="88"/>
    </location>
</feature>
<feature type="non-terminal residue">
    <location>
        <position position="160"/>
    </location>
</feature>
<gene>
    <name evidence="3" type="primary">putP</name>
</gene>
<accession>P23723</accession>
<sequence length="160" mass="17786">MAISTPMLVTFIVYIFGMVLIGFIAWRSTKNFDDYILGGRSLGPFVTALSAGASDMSGWLLMGLPGAIFISGISESWIAIGLTLGAWINWKLVAGRLRVHTEVNNNALTXPDYFTGRFEDHHNFHGFRTRVVKHIACILYRHDGALCGIGSRHAQRHFLH</sequence>
<evidence type="ECO:0000250" key="1">
    <source>
        <dbReference type="UniProtKB" id="P07117"/>
    </source>
</evidence>
<evidence type="ECO:0000255" key="2"/>
<evidence type="ECO:0000303" key="3">
    <source>
    </source>
</evidence>
<evidence type="ECO:0000303" key="4">
    <source>
    </source>
</evidence>
<evidence type="ECO:0000305" key="5"/>
<reference key="1">
    <citation type="journal article" date="1993" name="FEMS Microbiol. Lett.">
        <title>Genetic analysis of the regulatory putP region (coding for proline permease) in Klebsiella pneumoniae M5a1: evidence for regulation by the nac system.</title>
        <authorList>
            <person name="Suhr M."/>
            <person name="Kleiner D."/>
        </authorList>
    </citation>
    <scope>NUCLEOTIDE SEQUENCE [GENOMIC DNA]</scope>
    <scope>INDUCTION</scope>
    <source>
        <strain>M5a1</strain>
    </source>
</reference>
<reference key="2">
    <citation type="journal article" date="1991" name="J. Bacteriol.">
        <title>Regulation of proline utilization in enteric bacteria: cloning and characterization of the Klebsiella put control region.</title>
        <authorList>
            <person name="Chen L.M."/>
            <person name="Maloy S."/>
        </authorList>
    </citation>
    <scope>NUCLEOTIDE SEQUENCE [GENOMIC DNA] OF 1-58</scope>
</reference>
<proteinExistence type="evidence at transcript level"/>
<dbReference type="EMBL" id="X74934">
    <property type="protein sequence ID" value="CAA52889.1"/>
    <property type="molecule type" value="Genomic_DNA"/>
</dbReference>
<dbReference type="EMBL" id="M63160">
    <property type="protein sequence ID" value="AAA25138.1"/>
    <property type="molecule type" value="Genomic_DNA"/>
</dbReference>
<dbReference type="STRING" id="571.AB185_25110"/>
<dbReference type="GO" id="GO:0005886">
    <property type="term" value="C:plasma membrane"/>
    <property type="evidence" value="ECO:0007669"/>
    <property type="project" value="UniProtKB-SubCell"/>
</dbReference>
<dbReference type="GO" id="GO:0015193">
    <property type="term" value="F:L-proline transmembrane transporter activity"/>
    <property type="evidence" value="ECO:0007669"/>
    <property type="project" value="TreeGrafter"/>
</dbReference>
<dbReference type="GO" id="GO:0005298">
    <property type="term" value="F:proline:sodium symporter activity"/>
    <property type="evidence" value="ECO:0007669"/>
    <property type="project" value="TreeGrafter"/>
</dbReference>
<dbReference type="GO" id="GO:0015824">
    <property type="term" value="P:proline transport"/>
    <property type="evidence" value="ECO:0007669"/>
    <property type="project" value="TreeGrafter"/>
</dbReference>
<dbReference type="Gene3D" id="1.20.1730.10">
    <property type="entry name" value="Sodium/glucose cotransporter"/>
    <property type="match status" value="1"/>
</dbReference>
<dbReference type="InterPro" id="IPR038377">
    <property type="entry name" value="Na/Glc_symporter_sf"/>
</dbReference>
<dbReference type="InterPro" id="IPR001734">
    <property type="entry name" value="Na/solute_symporter"/>
</dbReference>
<dbReference type="InterPro" id="IPR050277">
    <property type="entry name" value="Sodium:Solute_Symporter"/>
</dbReference>
<dbReference type="PANTHER" id="PTHR48086">
    <property type="entry name" value="SODIUM/PROLINE SYMPORTER-RELATED"/>
    <property type="match status" value="1"/>
</dbReference>
<dbReference type="PANTHER" id="PTHR48086:SF3">
    <property type="entry name" value="SODIUM_PROLINE SYMPORTER"/>
    <property type="match status" value="1"/>
</dbReference>
<dbReference type="Pfam" id="PF00474">
    <property type="entry name" value="SSF"/>
    <property type="match status" value="1"/>
</dbReference>
<dbReference type="PROSITE" id="PS50283">
    <property type="entry name" value="NA_SOLUT_SYMP_3"/>
    <property type="match status" value="1"/>
</dbReference>
<protein>
    <recommendedName>
        <fullName evidence="1">Sodium/proline symporter</fullName>
    </recommendedName>
    <alternativeName>
        <fullName>Proline permease</fullName>
    </alternativeName>
</protein>
<comment type="function">
    <text evidence="1">Catalyzes the sodium-dependent uptake of extracellular L-proline.</text>
</comment>
<comment type="catalytic activity">
    <reaction evidence="1">
        <text>L-proline(in) + Na(+)(in) = L-proline(out) + Na(+)(out)</text>
        <dbReference type="Rhea" id="RHEA:28967"/>
        <dbReference type="ChEBI" id="CHEBI:29101"/>
        <dbReference type="ChEBI" id="CHEBI:60039"/>
    </reaction>
</comment>
<comment type="subcellular location">
    <subcellularLocation>
        <location evidence="1">Cell inner membrane</location>
        <topology evidence="2">Multi-pass membrane protein</topology>
    </subcellularLocation>
</comment>
<comment type="induction">
    <text evidence="4">Expression may be regulated by the Nac regulatory protein and the nitrogen regulation (Ntr) system.</text>
</comment>
<comment type="similarity">
    <text evidence="5">Belongs to the sodium:solute symporter (SSF) (TC 2.A.21) family.</text>
</comment>
<name>PUTP_KLEOX</name>